<proteinExistence type="inferred from homology"/>
<dbReference type="EC" id="2.3.1.234" evidence="1"/>
<dbReference type="EMBL" id="CP001089">
    <property type="protein sequence ID" value="ACD96030.1"/>
    <property type="molecule type" value="Genomic_DNA"/>
</dbReference>
<dbReference type="RefSeq" id="WP_012470363.1">
    <property type="nucleotide sequence ID" value="NC_010814.1"/>
</dbReference>
<dbReference type="SMR" id="B3E4U4"/>
<dbReference type="STRING" id="398767.Glov_2314"/>
<dbReference type="KEGG" id="glo:Glov_2314"/>
<dbReference type="eggNOG" id="COG0533">
    <property type="taxonomic scope" value="Bacteria"/>
</dbReference>
<dbReference type="HOGENOM" id="CLU_023208_0_2_7"/>
<dbReference type="OrthoDB" id="9806197at2"/>
<dbReference type="Proteomes" id="UP000002420">
    <property type="component" value="Chromosome"/>
</dbReference>
<dbReference type="GO" id="GO:0005737">
    <property type="term" value="C:cytoplasm"/>
    <property type="evidence" value="ECO:0007669"/>
    <property type="project" value="UniProtKB-SubCell"/>
</dbReference>
<dbReference type="GO" id="GO:0005506">
    <property type="term" value="F:iron ion binding"/>
    <property type="evidence" value="ECO:0007669"/>
    <property type="project" value="UniProtKB-UniRule"/>
</dbReference>
<dbReference type="GO" id="GO:0061711">
    <property type="term" value="F:N(6)-L-threonylcarbamoyladenine synthase activity"/>
    <property type="evidence" value="ECO:0007669"/>
    <property type="project" value="UniProtKB-EC"/>
</dbReference>
<dbReference type="GO" id="GO:0002949">
    <property type="term" value="P:tRNA threonylcarbamoyladenosine modification"/>
    <property type="evidence" value="ECO:0007669"/>
    <property type="project" value="UniProtKB-UniRule"/>
</dbReference>
<dbReference type="CDD" id="cd24133">
    <property type="entry name" value="ASKHA_NBD_TsaD_bac"/>
    <property type="match status" value="1"/>
</dbReference>
<dbReference type="FunFam" id="3.30.420.40:FF:000012">
    <property type="entry name" value="tRNA N6-adenosine threonylcarbamoyltransferase"/>
    <property type="match status" value="1"/>
</dbReference>
<dbReference type="FunFam" id="3.30.420.40:FF:000040">
    <property type="entry name" value="tRNA N6-adenosine threonylcarbamoyltransferase"/>
    <property type="match status" value="1"/>
</dbReference>
<dbReference type="Gene3D" id="3.30.420.40">
    <property type="match status" value="2"/>
</dbReference>
<dbReference type="HAMAP" id="MF_01445">
    <property type="entry name" value="TsaD"/>
    <property type="match status" value="1"/>
</dbReference>
<dbReference type="InterPro" id="IPR043129">
    <property type="entry name" value="ATPase_NBD"/>
</dbReference>
<dbReference type="InterPro" id="IPR000905">
    <property type="entry name" value="Gcp-like_dom"/>
</dbReference>
<dbReference type="InterPro" id="IPR017861">
    <property type="entry name" value="KAE1/TsaD"/>
</dbReference>
<dbReference type="InterPro" id="IPR022450">
    <property type="entry name" value="TsaD"/>
</dbReference>
<dbReference type="NCBIfam" id="TIGR00329">
    <property type="entry name" value="gcp_kae1"/>
    <property type="match status" value="1"/>
</dbReference>
<dbReference type="NCBIfam" id="TIGR03723">
    <property type="entry name" value="T6A_TsaD_YgjD"/>
    <property type="match status" value="1"/>
</dbReference>
<dbReference type="PANTHER" id="PTHR11735">
    <property type="entry name" value="TRNA N6-ADENOSINE THREONYLCARBAMOYLTRANSFERASE"/>
    <property type="match status" value="1"/>
</dbReference>
<dbReference type="PANTHER" id="PTHR11735:SF6">
    <property type="entry name" value="TRNA N6-ADENOSINE THREONYLCARBAMOYLTRANSFERASE, MITOCHONDRIAL"/>
    <property type="match status" value="1"/>
</dbReference>
<dbReference type="Pfam" id="PF00814">
    <property type="entry name" value="TsaD"/>
    <property type="match status" value="1"/>
</dbReference>
<dbReference type="PRINTS" id="PR00789">
    <property type="entry name" value="OSIALOPTASE"/>
</dbReference>
<dbReference type="SUPFAM" id="SSF53067">
    <property type="entry name" value="Actin-like ATPase domain"/>
    <property type="match status" value="2"/>
</dbReference>
<reference key="1">
    <citation type="submission" date="2008-05" db="EMBL/GenBank/DDBJ databases">
        <title>Complete sequence of chromosome of Geobacter lovleyi SZ.</title>
        <authorList>
            <consortium name="US DOE Joint Genome Institute"/>
            <person name="Lucas S."/>
            <person name="Copeland A."/>
            <person name="Lapidus A."/>
            <person name="Glavina del Rio T."/>
            <person name="Dalin E."/>
            <person name="Tice H."/>
            <person name="Bruce D."/>
            <person name="Goodwin L."/>
            <person name="Pitluck S."/>
            <person name="Chertkov O."/>
            <person name="Meincke L."/>
            <person name="Brettin T."/>
            <person name="Detter J.C."/>
            <person name="Han C."/>
            <person name="Tapia R."/>
            <person name="Kuske C.R."/>
            <person name="Schmutz J."/>
            <person name="Larimer F."/>
            <person name="Land M."/>
            <person name="Hauser L."/>
            <person name="Kyrpides N."/>
            <person name="Mikhailova N."/>
            <person name="Sung Y."/>
            <person name="Fletcher K.E."/>
            <person name="Ritalahti K.M."/>
            <person name="Loeffler F.E."/>
            <person name="Richardson P."/>
        </authorList>
    </citation>
    <scope>NUCLEOTIDE SEQUENCE [LARGE SCALE GENOMIC DNA]</scope>
    <source>
        <strain>ATCC BAA-1151 / DSM 17278 / SZ</strain>
    </source>
</reference>
<accession>B3E4U4</accession>
<name>TSAD_TRIL1</name>
<comment type="function">
    <text evidence="1">Required for the formation of a threonylcarbamoyl group on adenosine at position 37 (t(6)A37) in tRNAs that read codons beginning with adenine. Is involved in the transfer of the threonylcarbamoyl moiety of threonylcarbamoyl-AMP (TC-AMP) to the N6 group of A37, together with TsaE and TsaB. TsaD likely plays a direct catalytic role in this reaction.</text>
</comment>
<comment type="catalytic activity">
    <reaction evidence="1">
        <text>L-threonylcarbamoyladenylate + adenosine(37) in tRNA = N(6)-L-threonylcarbamoyladenosine(37) in tRNA + AMP + H(+)</text>
        <dbReference type="Rhea" id="RHEA:37059"/>
        <dbReference type="Rhea" id="RHEA-COMP:10162"/>
        <dbReference type="Rhea" id="RHEA-COMP:10163"/>
        <dbReference type="ChEBI" id="CHEBI:15378"/>
        <dbReference type="ChEBI" id="CHEBI:73682"/>
        <dbReference type="ChEBI" id="CHEBI:74411"/>
        <dbReference type="ChEBI" id="CHEBI:74418"/>
        <dbReference type="ChEBI" id="CHEBI:456215"/>
        <dbReference type="EC" id="2.3.1.234"/>
    </reaction>
</comment>
<comment type="cofactor">
    <cofactor evidence="1">
        <name>Fe(2+)</name>
        <dbReference type="ChEBI" id="CHEBI:29033"/>
    </cofactor>
    <text evidence="1">Binds 1 Fe(2+) ion per subunit.</text>
</comment>
<comment type="subcellular location">
    <subcellularLocation>
        <location evidence="1">Cytoplasm</location>
    </subcellularLocation>
</comment>
<comment type="similarity">
    <text evidence="1">Belongs to the KAE1 / TsaD family.</text>
</comment>
<feature type="chain" id="PRO_1000145985" description="tRNA N6-adenosine threonylcarbamoyltransferase">
    <location>
        <begin position="1"/>
        <end position="342"/>
    </location>
</feature>
<feature type="binding site" evidence="1">
    <location>
        <position position="111"/>
    </location>
    <ligand>
        <name>Fe cation</name>
        <dbReference type="ChEBI" id="CHEBI:24875"/>
    </ligand>
</feature>
<feature type="binding site" evidence="1">
    <location>
        <position position="115"/>
    </location>
    <ligand>
        <name>Fe cation</name>
        <dbReference type="ChEBI" id="CHEBI:24875"/>
    </ligand>
</feature>
<feature type="binding site" evidence="1">
    <location>
        <begin position="133"/>
        <end position="137"/>
    </location>
    <ligand>
        <name>substrate</name>
    </ligand>
</feature>
<feature type="binding site" evidence="1">
    <location>
        <position position="166"/>
    </location>
    <ligand>
        <name>substrate</name>
    </ligand>
</feature>
<feature type="binding site" evidence="1">
    <location>
        <position position="179"/>
    </location>
    <ligand>
        <name>substrate</name>
    </ligand>
</feature>
<feature type="binding site" evidence="1">
    <location>
        <position position="183"/>
    </location>
    <ligand>
        <name>substrate</name>
    </ligand>
</feature>
<feature type="binding site" evidence="1">
    <location>
        <position position="273"/>
    </location>
    <ligand>
        <name>substrate</name>
    </ligand>
</feature>
<feature type="binding site" evidence="1">
    <location>
        <position position="301"/>
    </location>
    <ligand>
        <name>Fe cation</name>
        <dbReference type="ChEBI" id="CHEBI:24875"/>
    </ligand>
</feature>
<gene>
    <name evidence="1" type="primary">tsaD</name>
    <name type="synonym">gcp</name>
    <name type="ordered locus">Glov_2314</name>
</gene>
<protein>
    <recommendedName>
        <fullName evidence="1">tRNA N6-adenosine threonylcarbamoyltransferase</fullName>
        <ecNumber evidence="1">2.3.1.234</ecNumber>
    </recommendedName>
    <alternativeName>
        <fullName evidence="1">N6-L-threonylcarbamoyladenine synthase</fullName>
        <shortName evidence="1">t(6)A synthase</shortName>
    </alternativeName>
    <alternativeName>
        <fullName evidence="1">t(6)A37 threonylcarbamoyladenosine biosynthesis protein TsaD</fullName>
    </alternativeName>
    <alternativeName>
        <fullName evidence="1">tRNA threonylcarbamoyladenosine biosynthesis protein TsaD</fullName>
    </alternativeName>
</protein>
<sequence>MVLLAIETSCDETAAAVVRDGRLVLSSVVSSQVAVHAEYGGVVPEIASRKHLEMITPVVRQALDEAGVSLAEIEGIAVTRGPGLLGALLVGVSMAKSLALACKIPLVGVHHIEGHLLAGFLEQPVAFPFLALVVSGGHTHLYRVDGIGRYRILGRTIDDAVGEAYDKTATLLGLGYPGGALIDRLAQQGSPTAVKFPRPLLHDKSLNFSFSGLKTAVLTHLKKQPHVPEGAELHDLCASFQAAVCEVLVKKTEAALKQEGLQRLVVGGGVACNSGLRHAMQQLATRLKIELQIPPPVLCGDNAAMLAVAGDAYLSAGCQDDLAMDATATWPLDQVARWEQLP</sequence>
<organism>
    <name type="scientific">Trichlorobacter lovleyi (strain ATCC BAA-1151 / DSM 17278 / SZ)</name>
    <name type="common">Geobacter lovleyi</name>
    <dbReference type="NCBI Taxonomy" id="398767"/>
    <lineage>
        <taxon>Bacteria</taxon>
        <taxon>Pseudomonadati</taxon>
        <taxon>Thermodesulfobacteriota</taxon>
        <taxon>Desulfuromonadia</taxon>
        <taxon>Geobacterales</taxon>
        <taxon>Geobacteraceae</taxon>
        <taxon>Trichlorobacter</taxon>
    </lineage>
</organism>
<keyword id="KW-0012">Acyltransferase</keyword>
<keyword id="KW-0963">Cytoplasm</keyword>
<keyword id="KW-0408">Iron</keyword>
<keyword id="KW-0479">Metal-binding</keyword>
<keyword id="KW-1185">Reference proteome</keyword>
<keyword id="KW-0808">Transferase</keyword>
<keyword id="KW-0819">tRNA processing</keyword>
<evidence type="ECO:0000255" key="1">
    <source>
        <dbReference type="HAMAP-Rule" id="MF_01445"/>
    </source>
</evidence>